<gene>
    <name type="ORF">AC3</name>
    <name type="ORF">AL3</name>
</gene>
<comment type="function">
    <text evidence="2">Increases viral DNA accumulation. Enhances infectivity and symptom expression.</text>
</comment>
<comment type="subunit">
    <text evidence="1">Homooligomer. Interacts with the replication-associated protein (REP). Interacts with host proliferating cell nuclear antigen (PCNA). Interacts with host retinoblastoma-related protein 1 (RBR1), and may thereby deregulate the host cell cycle. Oligomerization and interaction with PCNA are necessary for optimal replication enhancement (By similarity).</text>
</comment>
<comment type="similarity">
    <text evidence="3">Belongs to the geminiviridae replication enhancer protein family.</text>
</comment>
<evidence type="ECO:0000250" key="1"/>
<evidence type="ECO:0000269" key="2">
    <source>
    </source>
</evidence>
<evidence type="ECO:0000305" key="3"/>
<reference key="1">
    <citation type="journal article" date="1991" name="J. Gen. Virol.">
        <title>The nucleotide sequence of the infectious cloned DNA components of potato yellow mosaic virus.</title>
        <authorList>
            <person name="Coutts R.H.A."/>
            <person name="Coffin R.S."/>
            <person name="Roberts E.J.F."/>
            <person name="Hamilton W.D.O."/>
        </authorList>
    </citation>
    <scope>NUCLEOTIDE SEQUENCE [GENOMIC DNA]</scope>
</reference>
<reference key="2">
    <citation type="journal article" date="1995" name="J. Gen. Virol.">
        <title>Mutational analysis of potato yellow mosaic geminivirus.</title>
        <authorList>
            <person name="Sung Y.K."/>
            <person name="Coutts R.H."/>
        </authorList>
    </citation>
    <scope>FUNCTION</scope>
</reference>
<organism>
    <name type="scientific">Potato yellow mosaic virus (isolate Venezuela)</name>
    <name type="common">PYMV</name>
    <dbReference type="NCBI Taxonomy" id="223310"/>
    <lineage>
        <taxon>Viruses</taxon>
        <taxon>Monodnaviria</taxon>
        <taxon>Shotokuvirae</taxon>
        <taxon>Cressdnaviricota</taxon>
        <taxon>Repensiviricetes</taxon>
        <taxon>Geplafuvirales</taxon>
        <taxon>Geminiviridae</taxon>
        <taxon>Begomovirus</taxon>
        <taxon>Potato yellow mosaic virus</taxon>
    </lineage>
</organism>
<accession>P27264</accession>
<feature type="chain" id="PRO_0000222243" description="Replication enhancer protein">
    <location>
        <begin position="1"/>
        <end position="132"/>
    </location>
</feature>
<keyword id="KW-0945">Host-virus interaction</keyword>
<keyword id="KW-1185">Reference proteome</keyword>
<sequence length="132" mass="15784">MDSRTGELITARQAENGVFIWEIENPLYFKINQVEDMQYTRTRIYSVQIRFNHNLRRALDLHKAYLNFQVWTTSMTASGSNYLARFRQLVLLYLDRLGVISINNVIRSVRFATDRSYVNYVLENHSIKYKFY</sequence>
<name>REN_PYMVV</name>
<proteinExistence type="inferred from homology"/>
<protein>
    <recommendedName>
        <fullName>Replication enhancer protein</fullName>
        <shortName>REn</shortName>
    </recommendedName>
    <alternativeName>
        <fullName>Protein AC3</fullName>
    </alternativeName>
    <alternativeName>
        <fullName>Protein AL3</fullName>
    </alternativeName>
</protein>
<dbReference type="EMBL" id="D00940">
    <property type="protein sequence ID" value="BAA00780.1"/>
    <property type="molecule type" value="Genomic_DNA"/>
</dbReference>
<dbReference type="PIR" id="JU0366">
    <property type="entry name" value="QQCVP3"/>
</dbReference>
<dbReference type="RefSeq" id="NP_047239.1">
    <property type="nucleotide sequence ID" value="NC_001934.1"/>
</dbReference>
<dbReference type="GeneID" id="956389"/>
<dbReference type="KEGG" id="vg:956389"/>
<dbReference type="Proteomes" id="UP000006828">
    <property type="component" value="Genome"/>
</dbReference>
<dbReference type="GO" id="GO:0016032">
    <property type="term" value="P:viral process"/>
    <property type="evidence" value="ECO:0007669"/>
    <property type="project" value="InterPro"/>
</dbReference>
<dbReference type="InterPro" id="IPR000657">
    <property type="entry name" value="Gemini_AL3"/>
</dbReference>
<dbReference type="Pfam" id="PF01407">
    <property type="entry name" value="Gemini_AL3"/>
    <property type="match status" value="1"/>
</dbReference>
<dbReference type="PRINTS" id="PR00231">
    <property type="entry name" value="GEMCOATAL3"/>
</dbReference>
<organismHost>
    <name type="scientific">Solanum tuberosum</name>
    <name type="common">Potato</name>
    <dbReference type="NCBI Taxonomy" id="4113"/>
</organismHost>